<feature type="chain" id="PRO_0000238276" description="ATP synthase subunit alpha">
    <location>
        <begin position="1"/>
        <end position="503"/>
    </location>
</feature>
<feature type="binding site" evidence="1">
    <location>
        <begin position="169"/>
        <end position="176"/>
    </location>
    <ligand>
        <name>ATP</name>
        <dbReference type="ChEBI" id="CHEBI:30616"/>
    </ligand>
</feature>
<feature type="site" description="Required for activity" evidence="1">
    <location>
        <position position="363"/>
    </location>
</feature>
<dbReference type="EC" id="7.1.2.2" evidence="1"/>
<dbReference type="EMBL" id="AE016823">
    <property type="protein sequence ID" value="AAS69847.1"/>
    <property type="status" value="ALT_INIT"/>
    <property type="molecule type" value="Genomic_DNA"/>
</dbReference>
<dbReference type="RefSeq" id="WP_000695329.1">
    <property type="nucleotide sequence ID" value="NC_005823.1"/>
</dbReference>
<dbReference type="SMR" id="Q72SY1"/>
<dbReference type="GeneID" id="61144558"/>
<dbReference type="KEGG" id="lic:LIC_11241"/>
<dbReference type="HOGENOM" id="CLU_010091_2_1_12"/>
<dbReference type="Proteomes" id="UP000007037">
    <property type="component" value="Chromosome I"/>
</dbReference>
<dbReference type="GO" id="GO:0005886">
    <property type="term" value="C:plasma membrane"/>
    <property type="evidence" value="ECO:0007669"/>
    <property type="project" value="UniProtKB-SubCell"/>
</dbReference>
<dbReference type="GO" id="GO:0045259">
    <property type="term" value="C:proton-transporting ATP synthase complex"/>
    <property type="evidence" value="ECO:0007669"/>
    <property type="project" value="UniProtKB-KW"/>
</dbReference>
<dbReference type="GO" id="GO:0043531">
    <property type="term" value="F:ADP binding"/>
    <property type="evidence" value="ECO:0007669"/>
    <property type="project" value="TreeGrafter"/>
</dbReference>
<dbReference type="GO" id="GO:0005524">
    <property type="term" value="F:ATP binding"/>
    <property type="evidence" value="ECO:0007669"/>
    <property type="project" value="UniProtKB-UniRule"/>
</dbReference>
<dbReference type="GO" id="GO:0046933">
    <property type="term" value="F:proton-transporting ATP synthase activity, rotational mechanism"/>
    <property type="evidence" value="ECO:0007669"/>
    <property type="project" value="UniProtKB-UniRule"/>
</dbReference>
<dbReference type="CDD" id="cd18113">
    <property type="entry name" value="ATP-synt_F1_alpha_C"/>
    <property type="match status" value="1"/>
</dbReference>
<dbReference type="CDD" id="cd18116">
    <property type="entry name" value="ATP-synt_F1_alpha_N"/>
    <property type="match status" value="1"/>
</dbReference>
<dbReference type="CDD" id="cd01132">
    <property type="entry name" value="F1-ATPase_alpha_CD"/>
    <property type="match status" value="1"/>
</dbReference>
<dbReference type="FunFam" id="1.20.150.20:FF:000001">
    <property type="entry name" value="ATP synthase subunit alpha"/>
    <property type="match status" value="1"/>
</dbReference>
<dbReference type="FunFam" id="2.40.30.20:FF:000001">
    <property type="entry name" value="ATP synthase subunit alpha"/>
    <property type="match status" value="1"/>
</dbReference>
<dbReference type="FunFam" id="3.40.50.300:FF:000002">
    <property type="entry name" value="ATP synthase subunit alpha"/>
    <property type="match status" value="1"/>
</dbReference>
<dbReference type="Gene3D" id="2.40.30.20">
    <property type="match status" value="1"/>
</dbReference>
<dbReference type="Gene3D" id="1.20.150.20">
    <property type="entry name" value="ATP synthase alpha/beta chain, C-terminal domain"/>
    <property type="match status" value="1"/>
</dbReference>
<dbReference type="Gene3D" id="3.40.50.300">
    <property type="entry name" value="P-loop containing nucleotide triphosphate hydrolases"/>
    <property type="match status" value="1"/>
</dbReference>
<dbReference type="HAMAP" id="MF_01346">
    <property type="entry name" value="ATP_synth_alpha_bact"/>
    <property type="match status" value="1"/>
</dbReference>
<dbReference type="InterPro" id="IPR023366">
    <property type="entry name" value="ATP_synth_asu-like_sf"/>
</dbReference>
<dbReference type="InterPro" id="IPR000793">
    <property type="entry name" value="ATP_synth_asu_C"/>
</dbReference>
<dbReference type="InterPro" id="IPR038376">
    <property type="entry name" value="ATP_synth_asu_C_sf"/>
</dbReference>
<dbReference type="InterPro" id="IPR033732">
    <property type="entry name" value="ATP_synth_F1_a_nt-bd_dom"/>
</dbReference>
<dbReference type="InterPro" id="IPR005294">
    <property type="entry name" value="ATP_synth_F1_asu"/>
</dbReference>
<dbReference type="InterPro" id="IPR020003">
    <property type="entry name" value="ATPase_a/bsu_AS"/>
</dbReference>
<dbReference type="InterPro" id="IPR004100">
    <property type="entry name" value="ATPase_F1/V1/A1_a/bsu_N"/>
</dbReference>
<dbReference type="InterPro" id="IPR036121">
    <property type="entry name" value="ATPase_F1/V1/A1_a/bsu_N_sf"/>
</dbReference>
<dbReference type="InterPro" id="IPR000194">
    <property type="entry name" value="ATPase_F1/V1/A1_a/bsu_nucl-bd"/>
</dbReference>
<dbReference type="InterPro" id="IPR027417">
    <property type="entry name" value="P-loop_NTPase"/>
</dbReference>
<dbReference type="NCBIfam" id="TIGR00962">
    <property type="entry name" value="atpA"/>
    <property type="match status" value="1"/>
</dbReference>
<dbReference type="NCBIfam" id="NF009884">
    <property type="entry name" value="PRK13343.1"/>
    <property type="match status" value="1"/>
</dbReference>
<dbReference type="PANTHER" id="PTHR48082">
    <property type="entry name" value="ATP SYNTHASE SUBUNIT ALPHA, MITOCHONDRIAL"/>
    <property type="match status" value="1"/>
</dbReference>
<dbReference type="PANTHER" id="PTHR48082:SF2">
    <property type="entry name" value="ATP SYNTHASE SUBUNIT ALPHA, MITOCHONDRIAL"/>
    <property type="match status" value="1"/>
</dbReference>
<dbReference type="Pfam" id="PF00006">
    <property type="entry name" value="ATP-synt_ab"/>
    <property type="match status" value="1"/>
</dbReference>
<dbReference type="Pfam" id="PF00306">
    <property type="entry name" value="ATP-synt_ab_C"/>
    <property type="match status" value="1"/>
</dbReference>
<dbReference type="Pfam" id="PF02874">
    <property type="entry name" value="ATP-synt_ab_N"/>
    <property type="match status" value="1"/>
</dbReference>
<dbReference type="PIRSF" id="PIRSF039088">
    <property type="entry name" value="F_ATPase_subunit_alpha"/>
    <property type="match status" value="1"/>
</dbReference>
<dbReference type="SUPFAM" id="SSF47917">
    <property type="entry name" value="C-terminal domain of alpha and beta subunits of F1 ATP synthase"/>
    <property type="match status" value="1"/>
</dbReference>
<dbReference type="SUPFAM" id="SSF50615">
    <property type="entry name" value="N-terminal domain of alpha and beta subunits of F1 ATP synthase"/>
    <property type="match status" value="1"/>
</dbReference>
<dbReference type="SUPFAM" id="SSF52540">
    <property type="entry name" value="P-loop containing nucleoside triphosphate hydrolases"/>
    <property type="match status" value="1"/>
</dbReference>
<dbReference type="PROSITE" id="PS00152">
    <property type="entry name" value="ATPASE_ALPHA_BETA"/>
    <property type="match status" value="1"/>
</dbReference>
<name>ATPA_LEPIC</name>
<gene>
    <name evidence="1" type="primary">atpA</name>
    <name type="synonym">lic11241</name>
    <name type="ordered locus">LIC_11241</name>
</gene>
<sequence length="503" mass="55013">MKIKTDEITSVLKQEILNYKKDLGVEEVGTVLEIGDGIARVFGLKNVMSGEMVEFQNGIFGQAFNLEDNSVGVVVYGNYLDIQEGFSVKRTNRILEVPVGPELLGRVVNPLGEPIDGKGPINAKLTRPVESPAPGIAMRQPVGEPMQTGIKAIDAMIPIGRGQRELIIGDRGTGKTSIALDTILNQKGTGVICVYVAIGQKASTVASTVEMLRNKGALEYTIVVSATAADPAPLQYIAPYSGCSMAEYFMYNEKKATLVVYDDLSKQAVAYRQMSLLLRRPPGREAYPGDVFYLHSRLLERAAKLDDKYGAGSLTALPIIETQEGEVSAYIPTNVISITDGQIYLQSNLFASGNRPAVDVGISVSRVGSAAQIKAMKQVAGKMKLELAQFRDLEAFAQLGTELDPATQAQLDRGNRIVQMLKQPVSSPYPVEEQVVEIFAVTRGFMDKIPVAKVQEYGKYLLNTIKEQYSEVLDSIRKEKKISDEEKLGEVLSKVAEEFLRKH</sequence>
<comment type="function">
    <text evidence="1">Produces ATP from ADP in the presence of a proton gradient across the membrane. The alpha chain is a regulatory subunit.</text>
</comment>
<comment type="catalytic activity">
    <reaction evidence="1">
        <text>ATP + H2O + 4 H(+)(in) = ADP + phosphate + 5 H(+)(out)</text>
        <dbReference type="Rhea" id="RHEA:57720"/>
        <dbReference type="ChEBI" id="CHEBI:15377"/>
        <dbReference type="ChEBI" id="CHEBI:15378"/>
        <dbReference type="ChEBI" id="CHEBI:30616"/>
        <dbReference type="ChEBI" id="CHEBI:43474"/>
        <dbReference type="ChEBI" id="CHEBI:456216"/>
        <dbReference type="EC" id="7.1.2.2"/>
    </reaction>
</comment>
<comment type="subunit">
    <text evidence="1">F-type ATPases have 2 components, CF(1) - the catalytic core - and CF(0) - the membrane proton channel. CF(1) has five subunits: alpha(3), beta(3), gamma(1), delta(1), epsilon(1). CF(0) has three main subunits: a(1), b(2) and c(9-12). The alpha and beta chains form an alternating ring which encloses part of the gamma chain. CF(1) is attached to CF(0) by a central stalk formed by the gamma and epsilon chains, while a peripheral stalk is formed by the delta and b chains.</text>
</comment>
<comment type="subcellular location">
    <subcellularLocation>
        <location evidence="1">Cell inner membrane</location>
        <topology evidence="1">Peripheral membrane protein</topology>
    </subcellularLocation>
</comment>
<comment type="similarity">
    <text evidence="1">Belongs to the ATPase alpha/beta chains family.</text>
</comment>
<comment type="sequence caution" evidence="2">
    <conflict type="erroneous initiation">
        <sequence resource="EMBL-CDS" id="AAS69847"/>
    </conflict>
    <text>Extended N-terminus.</text>
</comment>
<accession>Q72SY1</accession>
<reference key="1">
    <citation type="journal article" date="2004" name="J. Bacteriol.">
        <title>Comparative genomics of two Leptospira interrogans serovars reveals novel insights into physiology and pathogenesis.</title>
        <authorList>
            <person name="Nascimento A.L.T.O."/>
            <person name="Ko A.I."/>
            <person name="Martins E.A.L."/>
            <person name="Monteiro-Vitorello C.B."/>
            <person name="Ho P.L."/>
            <person name="Haake D.A."/>
            <person name="Verjovski-Almeida S."/>
            <person name="Hartskeerl R.A."/>
            <person name="Marques M.V."/>
            <person name="Oliveira M.C."/>
            <person name="Menck C.F.M."/>
            <person name="Leite L.C.C."/>
            <person name="Carrer H."/>
            <person name="Coutinho L.L."/>
            <person name="Degrave W.M."/>
            <person name="Dellagostin O.A."/>
            <person name="El-Dorry H."/>
            <person name="Ferro E.S."/>
            <person name="Ferro M.I.T."/>
            <person name="Furlan L.R."/>
            <person name="Gamberini M."/>
            <person name="Giglioti E.A."/>
            <person name="Goes-Neto A."/>
            <person name="Goldman G.H."/>
            <person name="Goldman M.H.S."/>
            <person name="Harakava R."/>
            <person name="Jeronimo S.M.B."/>
            <person name="Junqueira-de-Azevedo I.L.M."/>
            <person name="Kimura E.T."/>
            <person name="Kuramae E.E."/>
            <person name="Lemos E.G.M."/>
            <person name="Lemos M.V.F."/>
            <person name="Marino C.L."/>
            <person name="Nunes L.R."/>
            <person name="de Oliveira R.C."/>
            <person name="Pereira G.G."/>
            <person name="Reis M.S."/>
            <person name="Schriefer A."/>
            <person name="Siqueira W.J."/>
            <person name="Sommer P."/>
            <person name="Tsai S.M."/>
            <person name="Simpson A.J.G."/>
            <person name="Ferro J.A."/>
            <person name="Camargo L.E.A."/>
            <person name="Kitajima J.P."/>
            <person name="Setubal J.C."/>
            <person name="Van Sluys M.A."/>
        </authorList>
    </citation>
    <scope>NUCLEOTIDE SEQUENCE [LARGE SCALE GENOMIC DNA]</scope>
    <source>
        <strain>Fiocruz L1-130</strain>
    </source>
</reference>
<organism>
    <name type="scientific">Leptospira interrogans serogroup Icterohaemorrhagiae serovar copenhageni (strain Fiocruz L1-130)</name>
    <dbReference type="NCBI Taxonomy" id="267671"/>
    <lineage>
        <taxon>Bacteria</taxon>
        <taxon>Pseudomonadati</taxon>
        <taxon>Spirochaetota</taxon>
        <taxon>Spirochaetia</taxon>
        <taxon>Leptospirales</taxon>
        <taxon>Leptospiraceae</taxon>
        <taxon>Leptospira</taxon>
    </lineage>
</organism>
<proteinExistence type="inferred from homology"/>
<keyword id="KW-0066">ATP synthesis</keyword>
<keyword id="KW-0067">ATP-binding</keyword>
<keyword id="KW-0997">Cell inner membrane</keyword>
<keyword id="KW-1003">Cell membrane</keyword>
<keyword id="KW-0139">CF(1)</keyword>
<keyword id="KW-0375">Hydrogen ion transport</keyword>
<keyword id="KW-0406">Ion transport</keyword>
<keyword id="KW-0472">Membrane</keyword>
<keyword id="KW-0547">Nucleotide-binding</keyword>
<keyword id="KW-1278">Translocase</keyword>
<keyword id="KW-0813">Transport</keyword>
<protein>
    <recommendedName>
        <fullName evidence="1">ATP synthase subunit alpha</fullName>
        <ecNumber evidence="1">7.1.2.2</ecNumber>
    </recommendedName>
    <alternativeName>
        <fullName evidence="1">ATP synthase F1 sector subunit alpha</fullName>
    </alternativeName>
    <alternativeName>
        <fullName evidence="1">F-ATPase subunit alpha</fullName>
    </alternativeName>
</protein>
<evidence type="ECO:0000255" key="1">
    <source>
        <dbReference type="HAMAP-Rule" id="MF_01346"/>
    </source>
</evidence>
<evidence type="ECO:0000305" key="2"/>